<protein>
    <recommendedName>
        <fullName evidence="2">Protein pelota homolog</fullName>
    </recommendedName>
</protein>
<name>PELO_CAEEL</name>
<evidence type="ECO:0000250" key="1">
    <source>
        <dbReference type="UniProtKB" id="P33309"/>
    </source>
</evidence>
<evidence type="ECO:0000250" key="2">
    <source>
        <dbReference type="UniProtKB" id="P48612"/>
    </source>
</evidence>
<evidence type="ECO:0000250" key="3">
    <source>
        <dbReference type="UniProtKB" id="Q9BRX2"/>
    </source>
</evidence>
<evidence type="ECO:0000305" key="4"/>
<evidence type="ECO:0000312" key="5">
    <source>
        <dbReference type="WormBase" id="R74.6"/>
    </source>
</evidence>
<feature type="chain" id="PRO_0000143192" description="Protein pelota homolog">
    <location>
        <begin position="1"/>
        <end position="381"/>
    </location>
</feature>
<organism>
    <name type="scientific">Caenorhabditis elegans</name>
    <dbReference type="NCBI Taxonomy" id="6239"/>
    <lineage>
        <taxon>Eukaryota</taxon>
        <taxon>Metazoa</taxon>
        <taxon>Ecdysozoa</taxon>
        <taxon>Nematoda</taxon>
        <taxon>Chromadorea</taxon>
        <taxon>Rhabditida</taxon>
        <taxon>Rhabditina</taxon>
        <taxon>Rhabditomorpha</taxon>
        <taxon>Rhabditoidea</taxon>
        <taxon>Rhabditidae</taxon>
        <taxon>Peloderinae</taxon>
        <taxon>Caenorhabditis</taxon>
    </lineage>
</organism>
<reference key="1">
    <citation type="journal article" date="1998" name="Science">
        <title>Genome sequence of the nematode C. elegans: a platform for investigating biology.</title>
        <authorList>
            <consortium name="The C. elegans sequencing consortium"/>
        </authorList>
    </citation>
    <scope>NUCLEOTIDE SEQUENCE [LARGE SCALE GENOMIC DNA]</scope>
    <source>
        <strain>Bristol N2</strain>
    </source>
</reference>
<keyword id="KW-0131">Cell cycle</keyword>
<keyword id="KW-0132">Cell division</keyword>
<keyword id="KW-0963">Cytoplasm</keyword>
<keyword id="KW-0469">Meiosis</keyword>
<keyword id="KW-0479">Metal-binding</keyword>
<keyword id="KW-0498">Mitosis</keyword>
<keyword id="KW-0539">Nucleus</keyword>
<keyword id="KW-1185">Reference proteome</keyword>
<comment type="function">
    <text evidence="3">Component of the Pelota-HBS1L complex, a complex that recognizes stalled ribosomes and triggers the No-Go Decay (NGD) pathway (By similarity). In the Pelota-HBS1L complex, pelo-1 recognizes ribosomes stalled at the 3' end of an mRNA and engages stalled ribosomes by destabilizing mRNA in the mRNA channel. Following ribosome-binding, the Pelota-HBS1L complex promotes the disassembly of stalled ribosomes, followed by degradation of damaged mRNAs as part of the NGD pathway (By similarity).</text>
</comment>
<comment type="cofactor">
    <cofactor evidence="1">
        <name>a divalent metal cation</name>
        <dbReference type="ChEBI" id="CHEBI:60240"/>
    </cofactor>
</comment>
<comment type="subunit">
    <text evidence="3">Component of the Pelota-HBS1L complex, also named Dom34-Hbs1 complex, composed of pelo-1 and hbs-1.</text>
</comment>
<comment type="subcellular location">
    <subcellularLocation>
        <location evidence="2">Cytoplasm</location>
    </subcellularLocation>
    <subcellularLocation>
        <location evidence="2">Nucleus</location>
    </subcellularLocation>
</comment>
<comment type="similarity">
    <text evidence="4">Belongs to the eukaryotic release factor 1 family. Pelota subfamily.</text>
</comment>
<sequence length="381" mass="42878">MKQFKRGIERDGTGFVVLMAEEAEDMWHIYNLIRIGDIIKASTIRKVVSETSTGTTSSQRVHTMLTVSVESIDFDPGAQELHLKGRNIEENDIVKLGAYHTIDLEPNRKFTLQKTEWDSIDLERLNLALDPAQAADVAAVVLHEGLANVCLITPAMTLTRAKIDMTIPRKRKGFTSQHEKGLEKFYEAVSTAFMRHVNLQVVKCVIVASRGFVKDAFMQHLIAHADANGKKFTTEQRAKFMLTHSSSGFKHALKEVLETPQVALRLADTKAQGEVKALNQFLELMSTEPDRAFYGFNHVNRANQELAIETLLVADSLFRAQDIETRRKYVRLVESVREQNGKVHIFSSMHVSGEQLAQLTGCAAILRFPMPDLDDEPMDEN</sequence>
<dbReference type="EMBL" id="BX284603">
    <property type="protein sequence ID" value="CAA85277.1"/>
    <property type="molecule type" value="Genomic_DNA"/>
</dbReference>
<dbReference type="PIR" id="T24256">
    <property type="entry name" value="T24256"/>
</dbReference>
<dbReference type="RefSeq" id="NP_497842.1">
    <property type="nucleotide sequence ID" value="NM_065441.6"/>
</dbReference>
<dbReference type="SMR" id="P50444"/>
<dbReference type="BioGRID" id="52565">
    <property type="interactions" value="2"/>
</dbReference>
<dbReference type="FunCoup" id="P50444">
    <property type="interactions" value="2898"/>
</dbReference>
<dbReference type="STRING" id="6239.R74.6.1"/>
<dbReference type="PaxDb" id="6239-R74.6"/>
<dbReference type="PeptideAtlas" id="P50444"/>
<dbReference type="EnsemblMetazoa" id="R74.6.1">
    <property type="protein sequence ID" value="R74.6.1"/>
    <property type="gene ID" value="WBGene00011280"/>
</dbReference>
<dbReference type="GeneID" id="187888"/>
<dbReference type="KEGG" id="cel:CELE_R74.6"/>
<dbReference type="UCSC" id="R74.6">
    <property type="organism name" value="c. elegans"/>
</dbReference>
<dbReference type="AGR" id="WB:WBGene00011280"/>
<dbReference type="CTD" id="187888"/>
<dbReference type="WormBase" id="R74.6">
    <property type="protein sequence ID" value="CE01059"/>
    <property type="gene ID" value="WBGene00011280"/>
    <property type="gene designation" value="pelo-1"/>
</dbReference>
<dbReference type="eggNOG" id="KOG2869">
    <property type="taxonomic scope" value="Eukaryota"/>
</dbReference>
<dbReference type="GeneTree" id="ENSGT00390000016326"/>
<dbReference type="HOGENOM" id="CLU_023334_3_1_1"/>
<dbReference type="InParanoid" id="P50444"/>
<dbReference type="OMA" id="DDLWHLK"/>
<dbReference type="OrthoDB" id="10249111at2759"/>
<dbReference type="PhylomeDB" id="P50444"/>
<dbReference type="PRO" id="PR:P50444"/>
<dbReference type="Proteomes" id="UP000001940">
    <property type="component" value="Chromosome III"/>
</dbReference>
<dbReference type="Bgee" id="WBGene00011280">
    <property type="expression patterns" value="Expressed in germ line (C elegans) and 4 other cell types or tissues"/>
</dbReference>
<dbReference type="GO" id="GO:0005737">
    <property type="term" value="C:cytoplasm"/>
    <property type="evidence" value="ECO:0000318"/>
    <property type="project" value="GO_Central"/>
</dbReference>
<dbReference type="GO" id="GO:0005634">
    <property type="term" value="C:nucleus"/>
    <property type="evidence" value="ECO:0007669"/>
    <property type="project" value="UniProtKB-SubCell"/>
</dbReference>
<dbReference type="GO" id="GO:0046872">
    <property type="term" value="F:metal ion binding"/>
    <property type="evidence" value="ECO:0007669"/>
    <property type="project" value="UniProtKB-KW"/>
</dbReference>
<dbReference type="GO" id="GO:0051301">
    <property type="term" value="P:cell division"/>
    <property type="evidence" value="ECO:0007669"/>
    <property type="project" value="UniProtKB-KW"/>
</dbReference>
<dbReference type="GO" id="GO:0051321">
    <property type="term" value="P:meiotic cell cycle"/>
    <property type="evidence" value="ECO:0007669"/>
    <property type="project" value="UniProtKB-KW"/>
</dbReference>
<dbReference type="GO" id="GO:0070651">
    <property type="term" value="P:nonfunctional rRNA decay"/>
    <property type="evidence" value="ECO:0000318"/>
    <property type="project" value="GO_Central"/>
</dbReference>
<dbReference type="GO" id="GO:0070966">
    <property type="term" value="P:nuclear-transcribed mRNA catabolic process, no-go decay"/>
    <property type="evidence" value="ECO:0000318"/>
    <property type="project" value="GO_Central"/>
</dbReference>
<dbReference type="GO" id="GO:0070481">
    <property type="term" value="P:nuclear-transcribed mRNA catabolic process, non-stop decay"/>
    <property type="evidence" value="ECO:0007669"/>
    <property type="project" value="InterPro"/>
</dbReference>
<dbReference type="GO" id="GO:0032790">
    <property type="term" value="P:ribosome disassembly"/>
    <property type="evidence" value="ECO:0000318"/>
    <property type="project" value="GO_Central"/>
</dbReference>
<dbReference type="GO" id="GO:0071025">
    <property type="term" value="P:RNA surveillance"/>
    <property type="evidence" value="ECO:0007669"/>
    <property type="project" value="InterPro"/>
</dbReference>
<dbReference type="FunFam" id="2.30.30.870:FF:000001">
    <property type="entry name" value="Protein pelota homolog"/>
    <property type="match status" value="1"/>
</dbReference>
<dbReference type="FunFam" id="3.30.1330.30:FF:000008">
    <property type="entry name" value="Protein pelota homolog"/>
    <property type="match status" value="1"/>
</dbReference>
<dbReference type="FunFam" id="3.30.420.60:FF:000002">
    <property type="entry name" value="Protein pelota homolog"/>
    <property type="match status" value="1"/>
</dbReference>
<dbReference type="Gene3D" id="3.30.1330.30">
    <property type="match status" value="1"/>
</dbReference>
<dbReference type="Gene3D" id="3.30.420.60">
    <property type="entry name" value="eRF1 domain 2"/>
    <property type="match status" value="1"/>
</dbReference>
<dbReference type="Gene3D" id="2.30.30.870">
    <property type="entry name" value="Pelota, domain A"/>
    <property type="match status" value="1"/>
</dbReference>
<dbReference type="InterPro" id="IPR042226">
    <property type="entry name" value="eFR1_2_sf"/>
</dbReference>
<dbReference type="InterPro" id="IPR005140">
    <property type="entry name" value="eRF1_1_Pelota"/>
</dbReference>
<dbReference type="InterPro" id="IPR005141">
    <property type="entry name" value="eRF1_2"/>
</dbReference>
<dbReference type="InterPro" id="IPR005142">
    <property type="entry name" value="eRF1_3"/>
</dbReference>
<dbReference type="InterPro" id="IPR038069">
    <property type="entry name" value="Pelota/DOM34_N"/>
</dbReference>
<dbReference type="InterPro" id="IPR029064">
    <property type="entry name" value="Ribosomal_eL30-like_sf"/>
</dbReference>
<dbReference type="InterPro" id="IPR004405">
    <property type="entry name" value="Transl-rel_pelota"/>
</dbReference>
<dbReference type="NCBIfam" id="TIGR00111">
    <property type="entry name" value="pelota"/>
    <property type="match status" value="1"/>
</dbReference>
<dbReference type="PANTHER" id="PTHR10853">
    <property type="entry name" value="PELOTA"/>
    <property type="match status" value="1"/>
</dbReference>
<dbReference type="PANTHER" id="PTHR10853:SF0">
    <property type="entry name" value="PROTEIN PELOTA HOMOLOG"/>
    <property type="match status" value="1"/>
</dbReference>
<dbReference type="Pfam" id="PF03463">
    <property type="entry name" value="eRF1_1"/>
    <property type="match status" value="1"/>
</dbReference>
<dbReference type="Pfam" id="PF03464">
    <property type="entry name" value="eRF1_2"/>
    <property type="match status" value="1"/>
</dbReference>
<dbReference type="Pfam" id="PF03465">
    <property type="entry name" value="eRF1_3"/>
    <property type="match status" value="1"/>
</dbReference>
<dbReference type="SMART" id="SM01194">
    <property type="entry name" value="eRF1_1"/>
    <property type="match status" value="1"/>
</dbReference>
<dbReference type="SUPFAM" id="SSF159065">
    <property type="entry name" value="Dom34/Pelota N-terminal domain-like"/>
    <property type="match status" value="1"/>
</dbReference>
<dbReference type="SUPFAM" id="SSF55315">
    <property type="entry name" value="L30e-like"/>
    <property type="match status" value="1"/>
</dbReference>
<dbReference type="SUPFAM" id="SSF53137">
    <property type="entry name" value="Translational machinery components"/>
    <property type="match status" value="1"/>
</dbReference>
<gene>
    <name evidence="5" type="primary">pelo-1</name>
    <name evidence="5" type="ORF">R74.6</name>
</gene>
<accession>P50444</accession>
<proteinExistence type="inferred from homology"/>